<protein>
    <recommendedName>
        <fullName>Peroxiredoxin-6</fullName>
        <ecNumber evidence="4">1.11.1.27</ecNumber>
    </recommendedName>
    <alternativeName>
        <fullName>1-Cys peroxiredoxin</fullName>
        <shortName>1-Cys PRX</shortName>
    </alternativeName>
    <alternativeName>
        <fullName>Acidic calcium-independent phospholipase A2</fullName>
        <shortName>aiPLA2</shortName>
        <ecNumber>3.1.1.4</ecNumber>
    </alternativeName>
    <alternativeName>
        <fullName evidence="6">Glutathione-dependent peroxiredoxin</fullName>
    </alternativeName>
    <alternativeName>
        <fullName evidence="4">Lysophosphatidylcholine acyltransferase 5</fullName>
        <shortName>LPC acyltransferase 5</shortName>
        <shortName>LPCAT-5</shortName>
        <shortName>Lyso-PC acyltransferase 5</shortName>
        <ecNumber evidence="4">2.3.1.23</ecNumber>
    </alternativeName>
    <alternativeName>
        <fullName>Non-selenium glutathione peroxidase</fullName>
        <shortName>NSGPx</shortName>
    </alternativeName>
</protein>
<organism>
    <name type="scientific">Pongo abelii</name>
    <name type="common">Sumatran orangutan</name>
    <name type="synonym">Pongo pygmaeus abelii</name>
    <dbReference type="NCBI Taxonomy" id="9601"/>
    <lineage>
        <taxon>Eukaryota</taxon>
        <taxon>Metazoa</taxon>
        <taxon>Chordata</taxon>
        <taxon>Craniata</taxon>
        <taxon>Vertebrata</taxon>
        <taxon>Euteleostomi</taxon>
        <taxon>Mammalia</taxon>
        <taxon>Eutheria</taxon>
        <taxon>Euarchontoglires</taxon>
        <taxon>Primates</taxon>
        <taxon>Haplorrhini</taxon>
        <taxon>Catarrhini</taxon>
        <taxon>Hominidae</taxon>
        <taxon>Pongo</taxon>
    </lineage>
</organism>
<name>PRDX6_PONAB</name>
<gene>
    <name type="primary">PRDX6</name>
</gene>
<sequence length="224" mass="25021">MPGGLLLGDVAPNFEANTTVGRIRFHDFLGDSWGILFSHPRDFTPVCTTELGRAAKLAPEFAKRNVKLIALSIDSVEDHLAWSKDINAYNCEEPTEKLPFPIIDDRNRELAILLGMLDPAEKDEKGMPGTARVVFVFGPDKKLKLSILYPATTGRNFDEILRVVISLQLTAEKRVATPVDWKDGDSVMVLPTIPEEEAKKLFPKGVFTKELPSGRKYLRYTPQP</sequence>
<keyword id="KW-0007">Acetylation</keyword>
<keyword id="KW-0049">Antioxidant</keyword>
<keyword id="KW-0963">Cytoplasm</keyword>
<keyword id="KW-0378">Hydrolase</keyword>
<keyword id="KW-0442">Lipid degradation</keyword>
<keyword id="KW-0443">Lipid metabolism</keyword>
<keyword id="KW-0458">Lysosome</keyword>
<keyword id="KW-0511">Multifunctional enzyme</keyword>
<keyword id="KW-0560">Oxidoreductase</keyword>
<keyword id="KW-0575">Peroxidase</keyword>
<keyword id="KW-0597">Phosphoprotein</keyword>
<keyword id="KW-0676">Redox-active center</keyword>
<keyword id="KW-1185">Reference proteome</keyword>
<keyword id="KW-0808">Transferase</keyword>
<feature type="chain" id="PRO_0000256862" description="Peroxiredoxin-6">
    <location>
        <begin position="1"/>
        <end position="224"/>
    </location>
</feature>
<feature type="domain" description="Thioredoxin" evidence="5">
    <location>
        <begin position="5"/>
        <end position="169"/>
    </location>
</feature>
<feature type="region of interest" description="Required and sufficient for targeting to lysosomes and lamellar bodies" evidence="2">
    <location>
        <begin position="31"/>
        <end position="40"/>
    </location>
</feature>
<feature type="active site" description="Cysteine sulfenic acid (-SOH) intermediate; for peroxidase activity" evidence="4">
    <location>
        <position position="47"/>
    </location>
</feature>
<feature type="active site" description="For phospholipase activity" evidence="2">
    <location>
        <position position="140"/>
    </location>
</feature>
<feature type="site" description="Important for phospholipase activity" evidence="2">
    <location>
        <position position="32"/>
    </location>
</feature>
<feature type="modified residue" description="Phosphothreonine" evidence="4">
    <location>
        <position position="44"/>
    </location>
</feature>
<feature type="modified residue" description="N6-acetyllysine" evidence="4">
    <location>
        <position position="63"/>
    </location>
</feature>
<feature type="modified residue" description="Phosphotyrosine" evidence="4">
    <location>
        <position position="89"/>
    </location>
</feature>
<feature type="modified residue" description="Phosphothreonine; by MAPK" evidence="2">
    <location>
        <position position="177"/>
    </location>
</feature>
<feature type="modified residue" description="N6-acetyllysine; alternate" evidence="4">
    <location>
        <position position="209"/>
    </location>
</feature>
<feature type="modified residue" description="N6-succinyllysine; alternate" evidence="1">
    <location>
        <position position="209"/>
    </location>
</feature>
<proteinExistence type="evidence at transcript level"/>
<evidence type="ECO:0000250" key="1">
    <source>
        <dbReference type="UniProtKB" id="O08709"/>
    </source>
</evidence>
<evidence type="ECO:0000250" key="2">
    <source>
        <dbReference type="UniProtKB" id="O35244"/>
    </source>
</evidence>
<evidence type="ECO:0000250" key="3">
    <source>
        <dbReference type="UniProtKB" id="O77834"/>
    </source>
</evidence>
<evidence type="ECO:0000250" key="4">
    <source>
        <dbReference type="UniProtKB" id="P30041"/>
    </source>
</evidence>
<evidence type="ECO:0000255" key="5">
    <source>
        <dbReference type="PROSITE-ProRule" id="PRU00691"/>
    </source>
</evidence>
<evidence type="ECO:0000305" key="6"/>
<reference key="1">
    <citation type="submission" date="2004-11" db="EMBL/GenBank/DDBJ databases">
        <authorList>
            <consortium name="The German cDNA consortium"/>
        </authorList>
    </citation>
    <scope>NUCLEOTIDE SEQUENCE [LARGE SCALE MRNA]</scope>
    <source>
        <tissue>Kidney</tissue>
    </source>
</reference>
<dbReference type="EC" id="1.11.1.27" evidence="4"/>
<dbReference type="EC" id="3.1.1.4"/>
<dbReference type="EC" id="2.3.1.23" evidence="4"/>
<dbReference type="EMBL" id="CR860178">
    <property type="protein sequence ID" value="CAH92320.1"/>
    <property type="molecule type" value="mRNA"/>
</dbReference>
<dbReference type="RefSeq" id="NP_001126361.1">
    <property type="nucleotide sequence ID" value="NM_001132889.2"/>
</dbReference>
<dbReference type="BMRB" id="Q5R7E0"/>
<dbReference type="SMR" id="Q5R7E0"/>
<dbReference type="FunCoup" id="Q5R7E0">
    <property type="interactions" value="1123"/>
</dbReference>
<dbReference type="STRING" id="9601.ENSPPYP00000017052"/>
<dbReference type="PeroxiBase" id="4422">
    <property type="entry name" value="Ppy1CysPrx"/>
</dbReference>
<dbReference type="GeneID" id="100173342"/>
<dbReference type="KEGG" id="pon:100173342"/>
<dbReference type="CTD" id="9588"/>
<dbReference type="eggNOG" id="KOG0854">
    <property type="taxonomic scope" value="Eukaryota"/>
</dbReference>
<dbReference type="InParanoid" id="Q5R7E0"/>
<dbReference type="OrthoDB" id="2996783at2759"/>
<dbReference type="Proteomes" id="UP000001595">
    <property type="component" value="Unplaced"/>
</dbReference>
<dbReference type="GO" id="GO:0005737">
    <property type="term" value="C:cytoplasm"/>
    <property type="evidence" value="ECO:0000250"/>
    <property type="project" value="UniProtKB"/>
</dbReference>
<dbReference type="GO" id="GO:0005829">
    <property type="term" value="C:cytosol"/>
    <property type="evidence" value="ECO:0007669"/>
    <property type="project" value="TreeGrafter"/>
</dbReference>
<dbReference type="GO" id="GO:0005764">
    <property type="term" value="C:lysosome"/>
    <property type="evidence" value="ECO:0007669"/>
    <property type="project" value="UniProtKB-SubCell"/>
</dbReference>
<dbReference type="GO" id="GO:0005739">
    <property type="term" value="C:mitochondrion"/>
    <property type="evidence" value="ECO:0007669"/>
    <property type="project" value="TreeGrafter"/>
</dbReference>
<dbReference type="GO" id="GO:0047184">
    <property type="term" value="F:1-acylglycerophosphocholine O-acyltransferase activity"/>
    <property type="evidence" value="ECO:0000250"/>
    <property type="project" value="UniProtKB"/>
</dbReference>
<dbReference type="GO" id="GO:0051920">
    <property type="term" value="F:peroxiredoxin activity"/>
    <property type="evidence" value="ECO:0007669"/>
    <property type="project" value="InterPro"/>
</dbReference>
<dbReference type="GO" id="GO:0004623">
    <property type="term" value="F:phospholipase A2 activity"/>
    <property type="evidence" value="ECO:0000250"/>
    <property type="project" value="UniProtKB"/>
</dbReference>
<dbReference type="GO" id="GO:0045454">
    <property type="term" value="P:cell redox homeostasis"/>
    <property type="evidence" value="ECO:0007669"/>
    <property type="project" value="TreeGrafter"/>
</dbReference>
<dbReference type="GO" id="GO:0016042">
    <property type="term" value="P:lipid catabolic process"/>
    <property type="evidence" value="ECO:0007669"/>
    <property type="project" value="UniProtKB-KW"/>
</dbReference>
<dbReference type="CDD" id="cd03016">
    <property type="entry name" value="PRX_1cys"/>
    <property type="match status" value="1"/>
</dbReference>
<dbReference type="FunFam" id="3.30.1020.10:FF:000001">
    <property type="entry name" value="1-Cys peroxiredoxin"/>
    <property type="match status" value="1"/>
</dbReference>
<dbReference type="FunFam" id="3.40.30.10:FF:000011">
    <property type="entry name" value="Peroxiredoxin PRX1"/>
    <property type="match status" value="1"/>
</dbReference>
<dbReference type="Gene3D" id="3.30.1020.10">
    <property type="entry name" value="Antioxidant, Horf6, Chain A, domain2"/>
    <property type="match status" value="1"/>
</dbReference>
<dbReference type="Gene3D" id="3.40.30.10">
    <property type="entry name" value="Glutaredoxin"/>
    <property type="match status" value="1"/>
</dbReference>
<dbReference type="InterPro" id="IPR000866">
    <property type="entry name" value="AhpC/TSA"/>
</dbReference>
<dbReference type="InterPro" id="IPR024706">
    <property type="entry name" value="Peroxiredoxin_AhpC-typ"/>
</dbReference>
<dbReference type="InterPro" id="IPR019479">
    <property type="entry name" value="Peroxiredoxin_C"/>
</dbReference>
<dbReference type="InterPro" id="IPR045020">
    <property type="entry name" value="PRX_1cys"/>
</dbReference>
<dbReference type="InterPro" id="IPR036249">
    <property type="entry name" value="Thioredoxin-like_sf"/>
</dbReference>
<dbReference type="InterPro" id="IPR013766">
    <property type="entry name" value="Thioredoxin_domain"/>
</dbReference>
<dbReference type="PANTHER" id="PTHR43503">
    <property type="entry name" value="MCG48959-RELATED"/>
    <property type="match status" value="1"/>
</dbReference>
<dbReference type="PANTHER" id="PTHR43503:SF11">
    <property type="entry name" value="PEROXIREDOXIN-6"/>
    <property type="match status" value="1"/>
</dbReference>
<dbReference type="Pfam" id="PF10417">
    <property type="entry name" value="1-cysPrx_C"/>
    <property type="match status" value="1"/>
</dbReference>
<dbReference type="Pfam" id="PF00578">
    <property type="entry name" value="AhpC-TSA"/>
    <property type="match status" value="1"/>
</dbReference>
<dbReference type="PIRSF" id="PIRSF000239">
    <property type="entry name" value="AHPC"/>
    <property type="match status" value="1"/>
</dbReference>
<dbReference type="SUPFAM" id="SSF52833">
    <property type="entry name" value="Thioredoxin-like"/>
    <property type="match status" value="1"/>
</dbReference>
<dbReference type="PROSITE" id="PS51352">
    <property type="entry name" value="THIOREDOXIN_2"/>
    <property type="match status" value="1"/>
</dbReference>
<accession>Q5R7E0</accession>
<comment type="function">
    <text evidence="4">Thiol-specific peroxidase that catalyzes the reduction of hydrogen peroxide and organic hydroperoxides to water and alcohols, respectively (By similarity). Can reduce H(2)O(2) and short chain organic, fatty acid, and phospholipid hydroperoxides (By similarity). Also has phospholipase activity, and can therefore either reduce the oxidized sn-2 fatty acyl group of phospholipids (peroxidase activity) or hydrolyze the sn-2 ester bond of phospholipids (phospholipase activity) (By similarity). These activities are dependent on binding to phospholipids at acidic pH and to oxidized phospholipds at cytosolic pH (By similarity). Plays a role in cell protection against oxidative stress by detoxifying peroxides and in phospholipid homeostasis (By similarity). Exhibits acyl-CoA-dependent lysophospholipid acyltransferase which mediates the conversion of lysophosphatidylcholine (1-acyl-sn-glycero-3-phosphocholine or LPC) into phosphatidylcholine (1,2-diacyl-sn-glycero-3-phosphocholine or PC) (By similarity). Shows a clear preference for LPC as the lysophospholipid and for palmitoyl CoA as the fatty acyl substrate (By similarity).</text>
</comment>
<comment type="catalytic activity">
    <reaction evidence="4">
        <text>a hydroperoxide + 2 glutathione = an alcohol + glutathione disulfide + H2O</text>
        <dbReference type="Rhea" id="RHEA:62632"/>
        <dbReference type="ChEBI" id="CHEBI:15377"/>
        <dbReference type="ChEBI" id="CHEBI:30879"/>
        <dbReference type="ChEBI" id="CHEBI:35924"/>
        <dbReference type="ChEBI" id="CHEBI:57925"/>
        <dbReference type="ChEBI" id="CHEBI:58297"/>
        <dbReference type="EC" id="1.11.1.27"/>
    </reaction>
</comment>
<comment type="catalytic activity">
    <reaction evidence="4">
        <text>a 1,2-diacyl-sn-glycero-3-phosphocholine + H2O = a 1-acyl-sn-glycero-3-phosphocholine + a fatty acid + H(+)</text>
        <dbReference type="Rhea" id="RHEA:15801"/>
        <dbReference type="ChEBI" id="CHEBI:15377"/>
        <dbReference type="ChEBI" id="CHEBI:15378"/>
        <dbReference type="ChEBI" id="CHEBI:28868"/>
        <dbReference type="ChEBI" id="CHEBI:57643"/>
        <dbReference type="ChEBI" id="CHEBI:58168"/>
        <dbReference type="EC" id="3.1.1.4"/>
    </reaction>
</comment>
<comment type="catalytic activity">
    <reaction evidence="4">
        <text>a 1-acyl-sn-glycero-3-phosphocholine + an acyl-CoA = a 1,2-diacyl-sn-glycero-3-phosphocholine + CoA</text>
        <dbReference type="Rhea" id="RHEA:12937"/>
        <dbReference type="ChEBI" id="CHEBI:57287"/>
        <dbReference type="ChEBI" id="CHEBI:57643"/>
        <dbReference type="ChEBI" id="CHEBI:58168"/>
        <dbReference type="ChEBI" id="CHEBI:58342"/>
        <dbReference type="EC" id="2.3.1.23"/>
    </reaction>
</comment>
<comment type="catalytic activity">
    <reaction evidence="4">
        <text>1-hexadecanoyl-sn-glycero-3-phosphocholine + hexadecanoyl-CoA = 1,2-dihexadecanoyl-sn-glycero-3-phosphocholine + CoA</text>
        <dbReference type="Rhea" id="RHEA:35983"/>
        <dbReference type="ChEBI" id="CHEBI:57287"/>
        <dbReference type="ChEBI" id="CHEBI:57379"/>
        <dbReference type="ChEBI" id="CHEBI:72998"/>
        <dbReference type="ChEBI" id="CHEBI:72999"/>
    </reaction>
    <physiologicalReaction direction="left-to-right" evidence="4">
        <dbReference type="Rhea" id="RHEA:35984"/>
    </physiologicalReaction>
</comment>
<comment type="catalytic activity">
    <reaction evidence="4">
        <text>1,2-dihexadecanoyl-sn-glycero-3-phosphocholine + H2O = 1-hexadecanoyl-sn-glycero-3-phosphocholine + hexadecanoate + H(+)</text>
        <dbReference type="Rhea" id="RHEA:41223"/>
        <dbReference type="ChEBI" id="CHEBI:7896"/>
        <dbReference type="ChEBI" id="CHEBI:15377"/>
        <dbReference type="ChEBI" id="CHEBI:15378"/>
        <dbReference type="ChEBI" id="CHEBI:72998"/>
        <dbReference type="ChEBI" id="CHEBI:72999"/>
    </reaction>
    <physiologicalReaction direction="left-to-right" evidence="4">
        <dbReference type="Rhea" id="RHEA:41224"/>
    </physiologicalReaction>
</comment>
<comment type="subunit">
    <text evidence="1 3 4">Homodimer (By similarity). Interacts with GSTP1; mediates PRDX6 glutathionylation and regeneration (By similarity). Interacts with APEX1. Interacts with STH. May interact with FAM168B (By similarity). May interact with HTR2A (By similarity).</text>
</comment>
<comment type="subcellular location">
    <subcellularLocation>
        <location evidence="2">Cytoplasm</location>
    </subcellularLocation>
    <subcellularLocation>
        <location evidence="2">Lysosome</location>
    </subcellularLocation>
    <text evidence="2">Also found in lung secretory organelles (lamellar bodies).</text>
</comment>
<comment type="PTM">
    <text evidence="4">Irreversibly inactivated by overoxidation of Cys-47 to sulfinic acid (Cys-SO(2)H) and sulfonic acid (Cys-SO(3)H) forms upon oxidative stress.</text>
</comment>
<comment type="PTM">
    <text evidence="2">Phosphorylation at Thr-177 by MAP kinases increases the phospholipase activity of the enzyme (By similarity). The phosphorylated form exhibits a greater lysophosphatidylcholine acyltransferase activity compared to the non-phosphorylated form (By similarity).</text>
</comment>
<comment type="miscellaneous">
    <text evidence="2">The active site is a conserved redox-active cysteine residue, the peroxidatic cysteine (C(P)), which makes the nucleophilic attack on the peroxide substrate. The peroxide oxidizes the C(P)-SH to cysteine sulfenic acid (C(P)-SOH), which then reacts with another cysteine residue, the resolving cysteine (C(R)), to form a disulfide bridge. The disulfide is subsequently reduced by an appropriate electron donor to complete the catalytic cycle. In this 1-Cys peroxiredoxin, no C(R) is present and C(P) instead forms a disulfide with a cysteine from another protein or with a small thiol molecule. C(P) is reactivated by glutathionylation mediated by glutathione S-transferase Pi, followed by spontaneous reduction of the enzyme with glutathione.</text>
</comment>
<comment type="similarity">
    <text evidence="6">Belongs to the peroxiredoxin family. Prx6 subfamily.</text>
</comment>